<keyword id="KW-0051">Antiviral defense</keyword>
<keyword id="KW-1185">Reference proteome</keyword>
<keyword id="KW-0694">RNA-binding</keyword>
<organism>
    <name type="scientific">Methanocaldococcus jannaschii (strain ATCC 43067 / DSM 2661 / JAL-1 / JCM 10045 / NBRC 100440)</name>
    <name type="common">Methanococcus jannaschii</name>
    <dbReference type="NCBI Taxonomy" id="243232"/>
    <lineage>
        <taxon>Archaea</taxon>
        <taxon>Methanobacteriati</taxon>
        <taxon>Methanobacteriota</taxon>
        <taxon>Methanomada group</taxon>
        <taxon>Methanococci</taxon>
        <taxon>Methanococcales</taxon>
        <taxon>Methanocaldococcaceae</taxon>
        <taxon>Methanocaldococcus</taxon>
    </lineage>
</organism>
<comment type="function">
    <text evidence="1">CRISPR (clustered regularly interspaced short palindromic repeat) is an adaptive immune system that provides protection against mobile genetic elements (viruses, transposable elements and conjugative plasmids). CRISPR clusters contain spacers, sequences complementary to antecedent mobile elements, and target invading nucleic acids. CRISPR clusters are transcribed and processed into CRISPR RNA (crRNA). The type III-A Csm effector complex binds crRNA and acts as a crRNA-guided RNase, DNase and cyclic oligoadenylate synthase; binding of target RNA cognate to the crRNA is required for all activities.</text>
</comment>
<comment type="function">
    <text evidence="1">This subunit might be involved in maturation of a crRNA intermediate to its mature form.</text>
</comment>
<comment type="subunit">
    <text evidence="1">Part of the Csm effector complex that includes Cas10, Csm2, Csm3, Csm4 and Csm5.</text>
</comment>
<comment type="miscellaneous">
    <text evidence="2">Encoded in a type III-A CRISPR locus.</text>
</comment>
<comment type="similarity">
    <text evidence="2">Belongs to the CRISPR-associated Csm5 family.</text>
</comment>
<reference key="1">
    <citation type="journal article" date="1996" name="Science">
        <title>Complete genome sequence of the methanogenic archaeon, Methanococcus jannaschii.</title>
        <authorList>
            <person name="Bult C.J."/>
            <person name="White O."/>
            <person name="Olsen G.J."/>
            <person name="Zhou L."/>
            <person name="Fleischmann R.D."/>
            <person name="Sutton G.G."/>
            <person name="Blake J.A."/>
            <person name="FitzGerald L.M."/>
            <person name="Clayton R.A."/>
            <person name="Gocayne J.D."/>
            <person name="Kerlavage A.R."/>
            <person name="Dougherty B.A."/>
            <person name="Tomb J.-F."/>
            <person name="Adams M.D."/>
            <person name="Reich C.I."/>
            <person name="Overbeek R."/>
            <person name="Kirkness E.F."/>
            <person name="Weinstock K.G."/>
            <person name="Merrick J.M."/>
            <person name="Glodek A."/>
            <person name="Scott J.L."/>
            <person name="Geoghagen N.S.M."/>
            <person name="Weidman J.F."/>
            <person name="Fuhrmann J.L."/>
            <person name="Nguyen D."/>
            <person name="Utterback T.R."/>
            <person name="Kelley J.M."/>
            <person name="Peterson J.D."/>
            <person name="Sadow P.W."/>
            <person name="Hanna M.C."/>
            <person name="Cotton M.D."/>
            <person name="Roberts K.M."/>
            <person name="Hurst M.A."/>
            <person name="Kaine B.P."/>
            <person name="Borodovsky M."/>
            <person name="Klenk H.-P."/>
            <person name="Fraser C.M."/>
            <person name="Smith H.O."/>
            <person name="Woese C.R."/>
            <person name="Venter J.C."/>
        </authorList>
    </citation>
    <scope>NUCLEOTIDE SEQUENCE [LARGE SCALE GENOMIC DNA]</scope>
    <source>
        <strain>ATCC 43067 / DSM 2661 / JAL-1 / JCM 10045 / NBRC 100440</strain>
    </source>
</reference>
<name>CSM5_METJA</name>
<feature type="chain" id="PRO_0000107464" description="CRISPR system Cms protein Csm5">
    <location>
        <begin position="1"/>
        <end position="418"/>
    </location>
</feature>
<dbReference type="EMBL" id="L77117">
    <property type="protein sequence ID" value="AAB99692.1"/>
    <property type="molecule type" value="Genomic_DNA"/>
</dbReference>
<dbReference type="PIR" id="A64508">
    <property type="entry name" value="A64508"/>
</dbReference>
<dbReference type="FunCoup" id="Q59061">
    <property type="interactions" value="3"/>
</dbReference>
<dbReference type="STRING" id="243232.MJ_1667"/>
<dbReference type="PaxDb" id="243232-MJ_1667"/>
<dbReference type="EnsemblBacteria" id="AAB99692">
    <property type="protein sequence ID" value="AAB99692"/>
    <property type="gene ID" value="MJ_1667"/>
</dbReference>
<dbReference type="KEGG" id="mja:MJ_1667"/>
<dbReference type="eggNOG" id="arCOG03718">
    <property type="taxonomic scope" value="Archaea"/>
</dbReference>
<dbReference type="HOGENOM" id="CLU_036878_3_0_2"/>
<dbReference type="InParanoid" id="Q59061"/>
<dbReference type="PhylomeDB" id="Q59061"/>
<dbReference type="Proteomes" id="UP000000805">
    <property type="component" value="Chromosome"/>
</dbReference>
<dbReference type="GO" id="GO:0003723">
    <property type="term" value="F:RNA binding"/>
    <property type="evidence" value="ECO:0007669"/>
    <property type="project" value="UniProtKB-KW"/>
</dbReference>
<dbReference type="GO" id="GO:0051607">
    <property type="term" value="P:defense response to virus"/>
    <property type="evidence" value="ECO:0007669"/>
    <property type="project" value="UniProtKB-KW"/>
</dbReference>
<dbReference type="CDD" id="cd09662">
    <property type="entry name" value="Csm5_III-A"/>
    <property type="match status" value="1"/>
</dbReference>
<dbReference type="InterPro" id="IPR010173">
    <property type="entry name" value="CRISPR-assoc_Csm5"/>
</dbReference>
<dbReference type="InterPro" id="IPR005537">
    <property type="entry name" value="RAMP_III_fam"/>
</dbReference>
<dbReference type="NCBIfam" id="TIGR01899">
    <property type="entry name" value="cas_TM1807_csm5"/>
    <property type="match status" value="1"/>
</dbReference>
<dbReference type="PANTHER" id="PTHR38007">
    <property type="entry name" value="CRISPR SYSTEM CMS PROTEIN CSM5"/>
    <property type="match status" value="1"/>
</dbReference>
<dbReference type="PANTHER" id="PTHR38007:SF1">
    <property type="entry name" value="CRISPR SYSTEM CMS PROTEIN CSM5"/>
    <property type="match status" value="1"/>
</dbReference>
<dbReference type="Pfam" id="PF03787">
    <property type="entry name" value="RAMPs"/>
    <property type="match status" value="1"/>
</dbReference>
<sequence>MLKTYPLKMMMTSRIRIMKTTINLIIRSIPMENQYYSHLIQRGITMEVKCELITPIFIGCGEEYSQLDYFIEDGLAHIIDLEKAVSDLDDLEKVDYISGLIVSNIDNNRLNLTAKDILESVGLNPYDYVIRKIESEIFSNKKTRVKKFINQNNTYYIPGSSIKGAIRTAYIFNYYDKNLPELLKILDDRNIKLHDKGKELEKNAISKDIPKDFFKYLKISDSLNLEGEFKFIHTKRWNYRKKKFDVPINMEGMTKGTFSINIKIEDEFFKNINKRLKTNYNPKDDEKKFDILKNLCNNFSKTVVEFELKKNNPVYVEKSYEKLLADINKDDAIYLNLGFGGGFLNKTVYPLLWKNDENHLYFRKIKSLFIALSGGNKNLKNAWLKANSYLDFPTTKTVYVKNNSAIAPLGWIKMTLVE</sequence>
<evidence type="ECO:0000250" key="1">
    <source>
        <dbReference type="UniProtKB" id="A0A0A7HF79"/>
    </source>
</evidence>
<evidence type="ECO:0000305" key="2"/>
<proteinExistence type="inferred from homology"/>
<protein>
    <recommendedName>
        <fullName>CRISPR system Cms protein Csm5</fullName>
    </recommendedName>
    <alternativeName>
        <fullName>CRISPR type III A-associated protein Csm5</fullName>
    </alternativeName>
</protein>
<accession>Q59061</accession>
<gene>
    <name type="primary">csm5</name>
    <name type="ordered locus">MJ1667</name>
</gene>